<dbReference type="EC" id="3.1.1.29" evidence="1"/>
<dbReference type="EMBL" id="CP000563">
    <property type="protein sequence ID" value="ABN62738.1"/>
    <property type="molecule type" value="Genomic_DNA"/>
</dbReference>
<dbReference type="RefSeq" id="WP_006082736.1">
    <property type="nucleotide sequence ID" value="NC_009052.1"/>
</dbReference>
<dbReference type="SMR" id="A3D7M5"/>
<dbReference type="STRING" id="325240.Sbal_3258"/>
<dbReference type="GeneID" id="11773484"/>
<dbReference type="KEGG" id="sbl:Sbal_3258"/>
<dbReference type="HOGENOM" id="CLU_062456_3_1_6"/>
<dbReference type="OrthoDB" id="9800507at2"/>
<dbReference type="Proteomes" id="UP000001557">
    <property type="component" value="Chromosome"/>
</dbReference>
<dbReference type="GO" id="GO:0005737">
    <property type="term" value="C:cytoplasm"/>
    <property type="evidence" value="ECO:0007669"/>
    <property type="project" value="UniProtKB-SubCell"/>
</dbReference>
<dbReference type="GO" id="GO:0004045">
    <property type="term" value="F:peptidyl-tRNA hydrolase activity"/>
    <property type="evidence" value="ECO:0007669"/>
    <property type="project" value="UniProtKB-UniRule"/>
</dbReference>
<dbReference type="GO" id="GO:0000049">
    <property type="term" value="F:tRNA binding"/>
    <property type="evidence" value="ECO:0007669"/>
    <property type="project" value="UniProtKB-UniRule"/>
</dbReference>
<dbReference type="GO" id="GO:0006515">
    <property type="term" value="P:protein quality control for misfolded or incompletely synthesized proteins"/>
    <property type="evidence" value="ECO:0007669"/>
    <property type="project" value="UniProtKB-UniRule"/>
</dbReference>
<dbReference type="GO" id="GO:0072344">
    <property type="term" value="P:rescue of stalled ribosome"/>
    <property type="evidence" value="ECO:0007669"/>
    <property type="project" value="UniProtKB-UniRule"/>
</dbReference>
<dbReference type="CDD" id="cd00462">
    <property type="entry name" value="PTH"/>
    <property type="match status" value="1"/>
</dbReference>
<dbReference type="FunFam" id="3.40.50.1470:FF:000001">
    <property type="entry name" value="Peptidyl-tRNA hydrolase"/>
    <property type="match status" value="1"/>
</dbReference>
<dbReference type="Gene3D" id="3.40.50.1470">
    <property type="entry name" value="Peptidyl-tRNA hydrolase"/>
    <property type="match status" value="1"/>
</dbReference>
<dbReference type="HAMAP" id="MF_00083">
    <property type="entry name" value="Pept_tRNA_hydro_bact"/>
    <property type="match status" value="1"/>
</dbReference>
<dbReference type="InterPro" id="IPR001328">
    <property type="entry name" value="Pept_tRNA_hydro"/>
</dbReference>
<dbReference type="InterPro" id="IPR018171">
    <property type="entry name" value="Pept_tRNA_hydro_CS"/>
</dbReference>
<dbReference type="InterPro" id="IPR036416">
    <property type="entry name" value="Pept_tRNA_hydro_sf"/>
</dbReference>
<dbReference type="NCBIfam" id="TIGR00447">
    <property type="entry name" value="pth"/>
    <property type="match status" value="1"/>
</dbReference>
<dbReference type="PANTHER" id="PTHR17224">
    <property type="entry name" value="PEPTIDYL-TRNA HYDROLASE"/>
    <property type="match status" value="1"/>
</dbReference>
<dbReference type="PANTHER" id="PTHR17224:SF1">
    <property type="entry name" value="PEPTIDYL-TRNA HYDROLASE"/>
    <property type="match status" value="1"/>
</dbReference>
<dbReference type="Pfam" id="PF01195">
    <property type="entry name" value="Pept_tRNA_hydro"/>
    <property type="match status" value="1"/>
</dbReference>
<dbReference type="SUPFAM" id="SSF53178">
    <property type="entry name" value="Peptidyl-tRNA hydrolase-like"/>
    <property type="match status" value="1"/>
</dbReference>
<dbReference type="PROSITE" id="PS01196">
    <property type="entry name" value="PEPT_TRNA_HYDROL_2"/>
    <property type="match status" value="1"/>
</dbReference>
<gene>
    <name evidence="1" type="primary">pth</name>
    <name type="ordered locus">Sbal_3258</name>
</gene>
<feature type="chain" id="PRO_1000010647" description="Peptidyl-tRNA hydrolase">
    <location>
        <begin position="1"/>
        <end position="195"/>
    </location>
</feature>
<feature type="active site" description="Proton acceptor" evidence="1">
    <location>
        <position position="22"/>
    </location>
</feature>
<feature type="binding site" evidence="1">
    <location>
        <position position="17"/>
    </location>
    <ligand>
        <name>tRNA</name>
        <dbReference type="ChEBI" id="CHEBI:17843"/>
    </ligand>
</feature>
<feature type="binding site" evidence="1">
    <location>
        <position position="68"/>
    </location>
    <ligand>
        <name>tRNA</name>
        <dbReference type="ChEBI" id="CHEBI:17843"/>
    </ligand>
</feature>
<feature type="binding site" evidence="1">
    <location>
        <position position="70"/>
    </location>
    <ligand>
        <name>tRNA</name>
        <dbReference type="ChEBI" id="CHEBI:17843"/>
    </ligand>
</feature>
<feature type="binding site" evidence="1">
    <location>
        <position position="116"/>
    </location>
    <ligand>
        <name>tRNA</name>
        <dbReference type="ChEBI" id="CHEBI:17843"/>
    </ligand>
</feature>
<feature type="site" description="Discriminates between blocked and unblocked aminoacyl-tRNA" evidence="1">
    <location>
        <position position="12"/>
    </location>
</feature>
<feature type="site" description="Stabilizes the basic form of H active site to accept a proton" evidence="1">
    <location>
        <position position="95"/>
    </location>
</feature>
<name>PTH_SHEB5</name>
<proteinExistence type="inferred from homology"/>
<keyword id="KW-0963">Cytoplasm</keyword>
<keyword id="KW-0378">Hydrolase</keyword>
<keyword id="KW-1185">Reference proteome</keyword>
<keyword id="KW-0694">RNA-binding</keyword>
<keyword id="KW-0820">tRNA-binding</keyword>
<protein>
    <recommendedName>
        <fullName evidence="1">Peptidyl-tRNA hydrolase</fullName>
        <shortName evidence="1">Pth</shortName>
        <ecNumber evidence="1">3.1.1.29</ecNumber>
    </recommendedName>
</protein>
<reference key="1">
    <citation type="submission" date="2007-02" db="EMBL/GenBank/DDBJ databases">
        <title>Complete sequence of chromosome of Shewanella baltica OS155.</title>
        <authorList>
            <consortium name="US DOE Joint Genome Institute"/>
            <person name="Copeland A."/>
            <person name="Lucas S."/>
            <person name="Lapidus A."/>
            <person name="Barry K."/>
            <person name="Detter J.C."/>
            <person name="Glavina del Rio T."/>
            <person name="Hammon N."/>
            <person name="Israni S."/>
            <person name="Dalin E."/>
            <person name="Tice H."/>
            <person name="Pitluck S."/>
            <person name="Sims D.R."/>
            <person name="Brettin T."/>
            <person name="Bruce D."/>
            <person name="Han C."/>
            <person name="Tapia R."/>
            <person name="Brainard J."/>
            <person name="Schmutz J."/>
            <person name="Larimer F."/>
            <person name="Land M."/>
            <person name="Hauser L."/>
            <person name="Kyrpides N."/>
            <person name="Mikhailova N."/>
            <person name="Brettar I."/>
            <person name="Klappenbach J."/>
            <person name="Konstantinidis K."/>
            <person name="Rodrigues J."/>
            <person name="Tiedje J."/>
            <person name="Richardson P."/>
        </authorList>
    </citation>
    <scope>NUCLEOTIDE SEQUENCE [LARGE SCALE GENOMIC DNA]</scope>
    <source>
        <strain>OS155 / ATCC BAA-1091</strain>
    </source>
</reference>
<organism>
    <name type="scientific">Shewanella baltica (strain OS155 / ATCC BAA-1091)</name>
    <dbReference type="NCBI Taxonomy" id="325240"/>
    <lineage>
        <taxon>Bacteria</taxon>
        <taxon>Pseudomonadati</taxon>
        <taxon>Pseudomonadota</taxon>
        <taxon>Gammaproteobacteria</taxon>
        <taxon>Alteromonadales</taxon>
        <taxon>Shewanellaceae</taxon>
        <taxon>Shewanella</taxon>
    </lineage>
</organism>
<sequence length="195" mass="21185">MSEIKLIVGLANPGAEYAHTRHNAGAWYVLELARICGVTLVADSKYFGLTARAVLHGKDVRLLIPTTYMNLSGKAVGALANFFRITPEEILVAHDELDLPPGVAKFKLGGGHGGHNGLKDIIAKLANDKNFYRLRLGIGHPGDKNQVSGYVLGKAPAKEQELIDAAIDEAVRSTEILFKQDMVKAMNRLHSFKAE</sequence>
<accession>A3D7M5</accession>
<comment type="function">
    <text evidence="1">Hydrolyzes ribosome-free peptidyl-tRNAs (with 1 or more amino acids incorporated), which drop off the ribosome during protein synthesis, or as a result of ribosome stalling.</text>
</comment>
<comment type="function">
    <text evidence="1">Catalyzes the release of premature peptidyl moieties from peptidyl-tRNA molecules trapped in stalled 50S ribosomal subunits, and thus maintains levels of free tRNAs and 50S ribosomes.</text>
</comment>
<comment type="catalytic activity">
    <reaction evidence="1">
        <text>an N-acyl-L-alpha-aminoacyl-tRNA + H2O = an N-acyl-L-amino acid + a tRNA + H(+)</text>
        <dbReference type="Rhea" id="RHEA:54448"/>
        <dbReference type="Rhea" id="RHEA-COMP:10123"/>
        <dbReference type="Rhea" id="RHEA-COMP:13883"/>
        <dbReference type="ChEBI" id="CHEBI:15377"/>
        <dbReference type="ChEBI" id="CHEBI:15378"/>
        <dbReference type="ChEBI" id="CHEBI:59874"/>
        <dbReference type="ChEBI" id="CHEBI:78442"/>
        <dbReference type="ChEBI" id="CHEBI:138191"/>
        <dbReference type="EC" id="3.1.1.29"/>
    </reaction>
</comment>
<comment type="subunit">
    <text evidence="1">Monomer.</text>
</comment>
<comment type="subcellular location">
    <subcellularLocation>
        <location evidence="1">Cytoplasm</location>
    </subcellularLocation>
</comment>
<comment type="similarity">
    <text evidence="1">Belongs to the PTH family.</text>
</comment>
<evidence type="ECO:0000255" key="1">
    <source>
        <dbReference type="HAMAP-Rule" id="MF_00083"/>
    </source>
</evidence>